<feature type="chain" id="PRO_1000164581" description="Orotidine 5'-phosphate decarboxylase">
    <location>
        <begin position="1"/>
        <end position="233"/>
    </location>
</feature>
<feature type="active site" description="Proton donor" evidence="1">
    <location>
        <position position="63"/>
    </location>
</feature>
<feature type="binding site" evidence="1">
    <location>
        <position position="11"/>
    </location>
    <ligand>
        <name>substrate</name>
    </ligand>
</feature>
<feature type="binding site" evidence="1">
    <location>
        <position position="34"/>
    </location>
    <ligand>
        <name>substrate</name>
    </ligand>
</feature>
<feature type="binding site" evidence="1">
    <location>
        <begin position="61"/>
        <end position="70"/>
    </location>
    <ligand>
        <name>substrate</name>
    </ligand>
</feature>
<feature type="binding site" evidence="1">
    <location>
        <position position="117"/>
    </location>
    <ligand>
        <name>substrate</name>
    </ligand>
</feature>
<feature type="binding site" evidence="1">
    <location>
        <position position="179"/>
    </location>
    <ligand>
        <name>substrate</name>
    </ligand>
</feature>
<feature type="binding site" evidence="1">
    <location>
        <position position="188"/>
    </location>
    <ligand>
        <name>substrate</name>
    </ligand>
</feature>
<feature type="binding site" evidence="1">
    <location>
        <position position="208"/>
    </location>
    <ligand>
        <name>substrate</name>
    </ligand>
</feature>
<feature type="binding site" evidence="1">
    <location>
        <position position="209"/>
    </location>
    <ligand>
        <name>substrate</name>
    </ligand>
</feature>
<keyword id="KW-0210">Decarboxylase</keyword>
<keyword id="KW-0456">Lyase</keyword>
<keyword id="KW-0665">Pyrimidine biosynthesis</keyword>
<gene>
    <name evidence="1" type="primary">pyrF</name>
    <name type="ordered locus">SPN23F06250</name>
</gene>
<name>PYRF_STRPJ</name>
<dbReference type="EC" id="4.1.1.23" evidence="1"/>
<dbReference type="EMBL" id="FM211187">
    <property type="protein sequence ID" value="CAR68474.1"/>
    <property type="molecule type" value="Genomic_DNA"/>
</dbReference>
<dbReference type="RefSeq" id="WP_001206731.1">
    <property type="nucleotide sequence ID" value="NC_011900.1"/>
</dbReference>
<dbReference type="SMR" id="B8ZMZ9"/>
<dbReference type="KEGG" id="sne:SPN23F06250"/>
<dbReference type="HOGENOM" id="CLU_067069_1_1_9"/>
<dbReference type="UniPathway" id="UPA00070">
    <property type="reaction ID" value="UER00120"/>
</dbReference>
<dbReference type="GO" id="GO:0005829">
    <property type="term" value="C:cytosol"/>
    <property type="evidence" value="ECO:0007669"/>
    <property type="project" value="TreeGrafter"/>
</dbReference>
<dbReference type="GO" id="GO:0004590">
    <property type="term" value="F:orotidine-5'-phosphate decarboxylase activity"/>
    <property type="evidence" value="ECO:0007669"/>
    <property type="project" value="UniProtKB-UniRule"/>
</dbReference>
<dbReference type="GO" id="GO:0006207">
    <property type="term" value="P:'de novo' pyrimidine nucleobase biosynthetic process"/>
    <property type="evidence" value="ECO:0007669"/>
    <property type="project" value="InterPro"/>
</dbReference>
<dbReference type="GO" id="GO:0044205">
    <property type="term" value="P:'de novo' UMP biosynthetic process"/>
    <property type="evidence" value="ECO:0007669"/>
    <property type="project" value="UniProtKB-UniRule"/>
</dbReference>
<dbReference type="CDD" id="cd04725">
    <property type="entry name" value="OMP_decarboxylase_like"/>
    <property type="match status" value="1"/>
</dbReference>
<dbReference type="FunFam" id="3.20.20.70:FF:000015">
    <property type="entry name" value="Orotidine 5'-phosphate decarboxylase"/>
    <property type="match status" value="1"/>
</dbReference>
<dbReference type="Gene3D" id="3.20.20.70">
    <property type="entry name" value="Aldolase class I"/>
    <property type="match status" value="1"/>
</dbReference>
<dbReference type="HAMAP" id="MF_01200_B">
    <property type="entry name" value="OMPdecase_type1_B"/>
    <property type="match status" value="1"/>
</dbReference>
<dbReference type="InterPro" id="IPR013785">
    <property type="entry name" value="Aldolase_TIM"/>
</dbReference>
<dbReference type="InterPro" id="IPR014732">
    <property type="entry name" value="OMPdecase"/>
</dbReference>
<dbReference type="InterPro" id="IPR018089">
    <property type="entry name" value="OMPdecase_AS"/>
</dbReference>
<dbReference type="InterPro" id="IPR047596">
    <property type="entry name" value="OMPdecase_bac"/>
</dbReference>
<dbReference type="InterPro" id="IPR001754">
    <property type="entry name" value="OMPdeCOase_dom"/>
</dbReference>
<dbReference type="InterPro" id="IPR011060">
    <property type="entry name" value="RibuloseP-bd_barrel"/>
</dbReference>
<dbReference type="NCBIfam" id="NF001273">
    <property type="entry name" value="PRK00230.1"/>
    <property type="match status" value="1"/>
</dbReference>
<dbReference type="NCBIfam" id="TIGR01740">
    <property type="entry name" value="pyrF"/>
    <property type="match status" value="1"/>
</dbReference>
<dbReference type="PANTHER" id="PTHR32119">
    <property type="entry name" value="OROTIDINE 5'-PHOSPHATE DECARBOXYLASE"/>
    <property type="match status" value="1"/>
</dbReference>
<dbReference type="PANTHER" id="PTHR32119:SF2">
    <property type="entry name" value="OROTIDINE 5'-PHOSPHATE DECARBOXYLASE"/>
    <property type="match status" value="1"/>
</dbReference>
<dbReference type="Pfam" id="PF00215">
    <property type="entry name" value="OMPdecase"/>
    <property type="match status" value="1"/>
</dbReference>
<dbReference type="SMART" id="SM00934">
    <property type="entry name" value="OMPdecase"/>
    <property type="match status" value="1"/>
</dbReference>
<dbReference type="SUPFAM" id="SSF51366">
    <property type="entry name" value="Ribulose-phoshate binding barrel"/>
    <property type="match status" value="1"/>
</dbReference>
<dbReference type="PROSITE" id="PS00156">
    <property type="entry name" value="OMPDECASE"/>
    <property type="match status" value="1"/>
</dbReference>
<reference key="1">
    <citation type="journal article" date="2009" name="J. Bacteriol.">
        <title>Role of conjugative elements in the evolution of the multidrug-resistant pandemic clone Streptococcus pneumoniae Spain23F ST81.</title>
        <authorList>
            <person name="Croucher N.J."/>
            <person name="Walker D."/>
            <person name="Romero P."/>
            <person name="Lennard N."/>
            <person name="Paterson G.K."/>
            <person name="Bason N.C."/>
            <person name="Mitchell A.M."/>
            <person name="Quail M.A."/>
            <person name="Andrew P.W."/>
            <person name="Parkhill J."/>
            <person name="Bentley S.D."/>
            <person name="Mitchell T.J."/>
        </authorList>
    </citation>
    <scope>NUCLEOTIDE SEQUENCE [LARGE SCALE GENOMIC DNA]</scope>
    <source>
        <strain>ATCC 700669 / Spain 23F-1</strain>
    </source>
</reference>
<protein>
    <recommendedName>
        <fullName evidence="1">Orotidine 5'-phosphate decarboxylase</fullName>
        <ecNumber evidence="1">4.1.1.23</ecNumber>
    </recommendedName>
    <alternativeName>
        <fullName evidence="1">OMP decarboxylase</fullName>
        <shortName evidence="1">OMPDCase</shortName>
        <shortName evidence="1">OMPdecase</shortName>
    </alternativeName>
</protein>
<organism>
    <name type="scientific">Streptococcus pneumoniae (strain ATCC 700669 / Spain 23F-1)</name>
    <dbReference type="NCBI Taxonomy" id="561276"/>
    <lineage>
        <taxon>Bacteria</taxon>
        <taxon>Bacillati</taxon>
        <taxon>Bacillota</taxon>
        <taxon>Bacilli</taxon>
        <taxon>Lactobacillales</taxon>
        <taxon>Streptococcaceae</taxon>
        <taxon>Streptococcus</taxon>
    </lineage>
</organism>
<comment type="function">
    <text evidence="1">Catalyzes the decarboxylation of orotidine 5'-monophosphate (OMP) to uridine 5'-monophosphate (UMP).</text>
</comment>
<comment type="catalytic activity">
    <reaction evidence="1">
        <text>orotidine 5'-phosphate + H(+) = UMP + CO2</text>
        <dbReference type="Rhea" id="RHEA:11596"/>
        <dbReference type="ChEBI" id="CHEBI:15378"/>
        <dbReference type="ChEBI" id="CHEBI:16526"/>
        <dbReference type="ChEBI" id="CHEBI:57538"/>
        <dbReference type="ChEBI" id="CHEBI:57865"/>
        <dbReference type="EC" id="4.1.1.23"/>
    </reaction>
</comment>
<comment type="pathway">
    <text evidence="1">Pyrimidine metabolism; UMP biosynthesis via de novo pathway; UMP from orotate: step 2/2.</text>
</comment>
<comment type="subunit">
    <text evidence="1">Homodimer.</text>
</comment>
<comment type="similarity">
    <text evidence="1">Belongs to the OMP decarboxylase family. Type 1 subfamily.</text>
</comment>
<sequence length="233" mass="25397">MREHRPVIALDFPSFEAVKEFLALFPAEESLYLKVGMELYYAAGPEIVSYLKGLGHSVFLDLKLHDIPNTVKSAMKVLSQLGVDMTNVHAAGGVEMMKAAREGLGSQAKLIAVTQLTSTSEAQMQEFQNIQTSLQESVIHYAKKTAEAGLDGVVCSAQEVQVIKQATNPDFICLTPGIRPAGAAVGDQKRVMTPADAYQIGSDYIVVGRPITQAEDPVAAYHTIKDEWTQDWN</sequence>
<evidence type="ECO:0000255" key="1">
    <source>
        <dbReference type="HAMAP-Rule" id="MF_01200"/>
    </source>
</evidence>
<accession>B8ZMZ9</accession>
<proteinExistence type="inferred from homology"/>